<keyword id="KW-1185">Reference proteome</keyword>
<keyword id="KW-0687">Ribonucleoprotein</keyword>
<keyword id="KW-0689">Ribosomal protein</keyword>
<dbReference type="EMBL" id="CP001392">
    <property type="protein sequence ID" value="ACM34138.1"/>
    <property type="molecule type" value="Genomic_DNA"/>
</dbReference>
<dbReference type="RefSeq" id="WP_011806473.1">
    <property type="nucleotide sequence ID" value="NC_011992.1"/>
</dbReference>
<dbReference type="SMR" id="B9ME99"/>
<dbReference type="GeneID" id="84680540"/>
<dbReference type="KEGG" id="dia:Dtpsy_2703"/>
<dbReference type="eggNOG" id="COG0228">
    <property type="taxonomic scope" value="Bacteria"/>
</dbReference>
<dbReference type="HOGENOM" id="CLU_100590_5_1_4"/>
<dbReference type="Proteomes" id="UP000000450">
    <property type="component" value="Chromosome"/>
</dbReference>
<dbReference type="GO" id="GO:0005737">
    <property type="term" value="C:cytoplasm"/>
    <property type="evidence" value="ECO:0007669"/>
    <property type="project" value="UniProtKB-ARBA"/>
</dbReference>
<dbReference type="GO" id="GO:0015935">
    <property type="term" value="C:small ribosomal subunit"/>
    <property type="evidence" value="ECO:0007669"/>
    <property type="project" value="TreeGrafter"/>
</dbReference>
<dbReference type="GO" id="GO:0003735">
    <property type="term" value="F:structural constituent of ribosome"/>
    <property type="evidence" value="ECO:0007669"/>
    <property type="project" value="InterPro"/>
</dbReference>
<dbReference type="GO" id="GO:0006412">
    <property type="term" value="P:translation"/>
    <property type="evidence" value="ECO:0007669"/>
    <property type="project" value="UniProtKB-UniRule"/>
</dbReference>
<dbReference type="Gene3D" id="3.30.1320.10">
    <property type="match status" value="1"/>
</dbReference>
<dbReference type="HAMAP" id="MF_00385">
    <property type="entry name" value="Ribosomal_bS16"/>
    <property type="match status" value="1"/>
</dbReference>
<dbReference type="InterPro" id="IPR000307">
    <property type="entry name" value="Ribosomal_bS16"/>
</dbReference>
<dbReference type="InterPro" id="IPR023803">
    <property type="entry name" value="Ribosomal_bS16_dom_sf"/>
</dbReference>
<dbReference type="NCBIfam" id="TIGR00002">
    <property type="entry name" value="S16"/>
    <property type="match status" value="1"/>
</dbReference>
<dbReference type="PANTHER" id="PTHR12919">
    <property type="entry name" value="30S RIBOSOMAL PROTEIN S16"/>
    <property type="match status" value="1"/>
</dbReference>
<dbReference type="PANTHER" id="PTHR12919:SF20">
    <property type="entry name" value="SMALL RIBOSOMAL SUBUNIT PROTEIN BS16M"/>
    <property type="match status" value="1"/>
</dbReference>
<dbReference type="Pfam" id="PF00886">
    <property type="entry name" value="Ribosomal_S16"/>
    <property type="match status" value="1"/>
</dbReference>
<dbReference type="SUPFAM" id="SSF54565">
    <property type="entry name" value="Ribosomal protein S16"/>
    <property type="match status" value="1"/>
</dbReference>
<evidence type="ECO:0000255" key="1">
    <source>
        <dbReference type="HAMAP-Rule" id="MF_00385"/>
    </source>
</evidence>
<evidence type="ECO:0000305" key="2"/>
<comment type="similarity">
    <text evidence="1">Belongs to the bacterial ribosomal protein bS16 family.</text>
</comment>
<gene>
    <name evidence="1" type="primary">rpsP</name>
    <name type="ordered locus">Dtpsy_2703</name>
</gene>
<proteinExistence type="inferred from homology"/>
<feature type="chain" id="PRO_1000196390" description="Small ribosomal subunit protein bS16">
    <location>
        <begin position="1"/>
        <end position="83"/>
    </location>
</feature>
<reference key="1">
    <citation type="submission" date="2009-01" db="EMBL/GenBank/DDBJ databases">
        <title>Complete sequence of Diaphorobacter sp. TPSY.</title>
        <authorList>
            <consortium name="US DOE Joint Genome Institute"/>
            <person name="Lucas S."/>
            <person name="Copeland A."/>
            <person name="Lapidus A."/>
            <person name="Glavina del Rio T."/>
            <person name="Tice H."/>
            <person name="Bruce D."/>
            <person name="Goodwin L."/>
            <person name="Pitluck S."/>
            <person name="Chertkov O."/>
            <person name="Brettin T."/>
            <person name="Detter J.C."/>
            <person name="Han C."/>
            <person name="Larimer F."/>
            <person name="Land M."/>
            <person name="Hauser L."/>
            <person name="Kyrpides N."/>
            <person name="Mikhailova N."/>
            <person name="Coates J.D."/>
        </authorList>
    </citation>
    <scope>NUCLEOTIDE SEQUENCE [LARGE SCALE GENOMIC DNA]</scope>
    <source>
        <strain>TPSY</strain>
    </source>
</reference>
<name>RS16_ACIET</name>
<protein>
    <recommendedName>
        <fullName evidence="1">Small ribosomal subunit protein bS16</fullName>
    </recommendedName>
    <alternativeName>
        <fullName evidence="2">30S ribosomal protein S16</fullName>
    </alternativeName>
</protein>
<organism>
    <name type="scientific">Acidovorax ebreus (strain TPSY)</name>
    <name type="common">Diaphorobacter sp. (strain TPSY)</name>
    <dbReference type="NCBI Taxonomy" id="535289"/>
    <lineage>
        <taxon>Bacteria</taxon>
        <taxon>Pseudomonadati</taxon>
        <taxon>Pseudomonadota</taxon>
        <taxon>Betaproteobacteria</taxon>
        <taxon>Burkholderiales</taxon>
        <taxon>Comamonadaceae</taxon>
        <taxon>Diaphorobacter</taxon>
    </lineage>
</organism>
<sequence length="83" mass="9302">MVVIRLSRGGSKGRPFFNIVVADKRVRRDGRFIERLGFYNPSAKEGEEGLRIAQDRLTYWKGVGAQPSPTVDRLIKQAAQKAA</sequence>
<accession>B9ME99</accession>